<reference key="1">
    <citation type="journal article" date="1999" name="Nature">
        <title>Sequence and analysis of chromosome 2 of the plant Arabidopsis thaliana.</title>
        <authorList>
            <person name="Lin X."/>
            <person name="Kaul S."/>
            <person name="Rounsley S.D."/>
            <person name="Shea T.P."/>
            <person name="Benito M.-I."/>
            <person name="Town C.D."/>
            <person name="Fujii C.Y."/>
            <person name="Mason T.M."/>
            <person name="Bowman C.L."/>
            <person name="Barnstead M.E."/>
            <person name="Feldblyum T.V."/>
            <person name="Buell C.R."/>
            <person name="Ketchum K.A."/>
            <person name="Lee J.J."/>
            <person name="Ronning C.M."/>
            <person name="Koo H.L."/>
            <person name="Moffat K.S."/>
            <person name="Cronin L.A."/>
            <person name="Shen M."/>
            <person name="Pai G."/>
            <person name="Van Aken S."/>
            <person name="Umayam L."/>
            <person name="Tallon L.J."/>
            <person name="Gill J.E."/>
            <person name="Adams M.D."/>
            <person name="Carrera A.J."/>
            <person name="Creasy T.H."/>
            <person name="Goodman H.M."/>
            <person name="Somerville C.R."/>
            <person name="Copenhaver G.P."/>
            <person name="Preuss D."/>
            <person name="Nierman W.C."/>
            <person name="White O."/>
            <person name="Eisen J.A."/>
            <person name="Salzberg S.L."/>
            <person name="Fraser C.M."/>
            <person name="Venter J.C."/>
        </authorList>
    </citation>
    <scope>NUCLEOTIDE SEQUENCE [LARGE SCALE GENOMIC DNA]</scope>
    <source>
        <strain>cv. Columbia</strain>
    </source>
</reference>
<reference key="2">
    <citation type="journal article" date="2017" name="Plant J.">
        <title>Araport11: a complete reannotation of the Arabidopsis thaliana reference genome.</title>
        <authorList>
            <person name="Cheng C.Y."/>
            <person name="Krishnakumar V."/>
            <person name="Chan A.P."/>
            <person name="Thibaud-Nissen F."/>
            <person name="Schobel S."/>
            <person name="Town C.D."/>
        </authorList>
    </citation>
    <scope>GENOME REANNOTATION</scope>
    <source>
        <strain>cv. Columbia</strain>
    </source>
</reference>
<reference key="3">
    <citation type="journal article" date="2000" name="Plant Physiol.">
        <title>A new set of Arabidopsis expressed sequence tags from developing seeds. The metabolic pathway from carbohydrates to seed oil.</title>
        <authorList>
            <person name="White J.A."/>
            <person name="Todd J."/>
            <person name="Newman T."/>
            <person name="Focks N."/>
            <person name="Girke T."/>
            <person name="de Ilarduya O.M."/>
            <person name="Jaworski J.G."/>
            <person name="Ohlrogge J.B."/>
            <person name="Benning C."/>
        </authorList>
    </citation>
    <scope>NUCLEOTIDE SEQUENCE [MRNA] OF 309-442</scope>
</reference>
<reference key="4">
    <citation type="journal article" date="2004" name="Plant Physiol.">
        <title>Type-B response regulators display overlapping expression patterns in Arabidopsis.</title>
        <authorList>
            <person name="Mason M.G."/>
            <person name="Li J."/>
            <person name="Mathews D.E."/>
            <person name="Kieber J.J."/>
            <person name="Schaller G.E."/>
        </authorList>
    </citation>
    <scope>TISSUE SPECIFICITY</scope>
</reference>
<reference key="5">
    <citation type="journal article" date="2007" name="Curr. Biol.">
        <title>Cytokinins determine Arabidopsis root-meristem size by controlling cell differentiation.</title>
        <authorList>
            <person name="Dello Ioio R."/>
            <person name="Linhares F.S."/>
            <person name="Scacchi E."/>
            <person name="Casamitjana-Martinez E."/>
            <person name="Heidstra R."/>
            <person name="Costantino P."/>
            <person name="Sabatini S."/>
        </authorList>
    </citation>
    <scope>FUNCTION</scope>
    <scope>TISSUE SPECIFICITY</scope>
    <scope>DEVELOPMENTAL STAGE</scope>
</reference>
<reference key="6">
    <citation type="journal article" date="2010" name="Curr. Biol.">
        <title>The rate of cell differentiation controls the Arabidopsis root meristem growth phase.</title>
        <authorList>
            <person name="Moubayidin L."/>
            <person name="Perilli S."/>
            <person name="Dello Ioio R."/>
            <person name="Di Mambro R."/>
            <person name="Costantino P."/>
            <person name="Sabatini S."/>
        </authorList>
    </citation>
    <scope>FUNCTION</scope>
</reference>
<comment type="function">
    <text evidence="2 8 9">Transcriptional activator that binds specifically to the DNA sequence 5'-[AG]GATT-3'. Functions as a response regulator involved in His-to-Asp phosphorelay signal transduction system. Phosphorylation of the Asp residue in the receiver domain activates the ability of the protein to promote the transcription of target genes. Could directly activate some type-A response regulators in response to cytokinins. Involved in the root-meristem size determination through the regulation of cell differentiation (PubMed:17363254). Involved in activating SHY2 during meristem growth and controls PIN expression via activation of SHY2 (PubMed:20605455).</text>
</comment>
<comment type="subunit">
    <text evidence="1">Binds the target DNA as a monomer.</text>
</comment>
<comment type="subcellular location">
    <subcellularLocation>
        <location>Nucleus</location>
    </subcellularLocation>
</comment>
<comment type="tissue specificity">
    <text evidence="7 8">Detected in the whole plant. Predominantly expressed in leaves. Expressed at the root transition zone (PubMed:17363254).</text>
</comment>
<comment type="developmental stage">
    <text evidence="8">Detected immediately after seed germination.</text>
</comment>
<comment type="PTM">
    <text>Two-component system major event consists of a His-to-Asp phosphorelay between a sensor histidine kinase (HK) and a response regulator (RR). In plants, the His-to-Asp phosphorelay involves an additional intermediate named Histidine-containing phosphotransfer protein (HPt). This multistep phosphorelay consists of a His-Asp-His-Asp sequential transfer of a phosphate group between first a His and an Asp of the HK protein, followed by the transfer to a conserved His of the HPt protein and finally the transfer to an Asp in the receiver domain of the RR protein.</text>
</comment>
<comment type="similarity">
    <text evidence="10">Belongs to the ARR family. Type-B subfamily.</text>
</comment>
<name>ARR12_ARATH</name>
<organism>
    <name type="scientific">Arabidopsis thaliana</name>
    <name type="common">Mouse-ear cress</name>
    <dbReference type="NCBI Taxonomy" id="3702"/>
    <lineage>
        <taxon>Eukaryota</taxon>
        <taxon>Viridiplantae</taxon>
        <taxon>Streptophyta</taxon>
        <taxon>Embryophyta</taxon>
        <taxon>Tracheophyta</taxon>
        <taxon>Spermatophyta</taxon>
        <taxon>Magnoliopsida</taxon>
        <taxon>eudicotyledons</taxon>
        <taxon>Gunneridae</taxon>
        <taxon>Pentapetalae</taxon>
        <taxon>rosids</taxon>
        <taxon>malvids</taxon>
        <taxon>Brassicales</taxon>
        <taxon>Brassicaceae</taxon>
        <taxon>Camelineae</taxon>
        <taxon>Arabidopsis</taxon>
    </lineage>
</organism>
<evidence type="ECO:0000250" key="1"/>
<evidence type="ECO:0000250" key="2">
    <source>
        <dbReference type="UniProtKB" id="Q940D0"/>
    </source>
</evidence>
<evidence type="ECO:0000255" key="3"/>
<evidence type="ECO:0000255" key="4">
    <source>
        <dbReference type="PROSITE-ProRule" id="PRU00169"/>
    </source>
</evidence>
<evidence type="ECO:0000255" key="5">
    <source>
        <dbReference type="PROSITE-ProRule" id="PRU00625"/>
    </source>
</evidence>
<evidence type="ECO:0000256" key="6">
    <source>
        <dbReference type="SAM" id="MobiDB-lite"/>
    </source>
</evidence>
<evidence type="ECO:0000269" key="7">
    <source>
    </source>
</evidence>
<evidence type="ECO:0000269" key="8">
    <source>
    </source>
</evidence>
<evidence type="ECO:0000269" key="9">
    <source>
    </source>
</evidence>
<evidence type="ECO:0000305" key="10"/>
<proteinExistence type="evidence at transcript level"/>
<accession>P62598</accession>
<accession>F4IRL1</accession>
<dbReference type="EMBL" id="CP002685">
    <property type="protein sequence ID" value="AEC07667.1"/>
    <property type="molecule type" value="Genomic_DNA"/>
</dbReference>
<dbReference type="EMBL" id="BE522295">
    <property type="status" value="NOT_ANNOTATED_CDS"/>
    <property type="molecule type" value="mRNA"/>
</dbReference>
<dbReference type="RefSeq" id="NP_180090.6">
    <property type="nucleotide sequence ID" value="NM_128075.7"/>
</dbReference>
<dbReference type="SMR" id="P62598"/>
<dbReference type="BioGRID" id="2408">
    <property type="interactions" value="8"/>
</dbReference>
<dbReference type="FunCoup" id="P62598">
    <property type="interactions" value="571"/>
</dbReference>
<dbReference type="IntAct" id="P62598">
    <property type="interactions" value="8"/>
</dbReference>
<dbReference type="STRING" id="3702.P62598"/>
<dbReference type="iPTMnet" id="P62598"/>
<dbReference type="PaxDb" id="3702-AT2G25180.1"/>
<dbReference type="ProteomicsDB" id="246895"/>
<dbReference type="EnsemblPlants" id="AT2G25180.1">
    <property type="protein sequence ID" value="AT2G25180.1"/>
    <property type="gene ID" value="AT2G25180"/>
</dbReference>
<dbReference type="GeneID" id="817056"/>
<dbReference type="Gramene" id="AT2G25180.1">
    <property type="protein sequence ID" value="AT2G25180.1"/>
    <property type="gene ID" value="AT2G25180"/>
</dbReference>
<dbReference type="KEGG" id="ath:AT2G25180"/>
<dbReference type="Araport" id="AT2G25180"/>
<dbReference type="TAIR" id="AT2G25180">
    <property type="gene designation" value="RR12"/>
</dbReference>
<dbReference type="eggNOG" id="KOG1601">
    <property type="taxonomic scope" value="Eukaryota"/>
</dbReference>
<dbReference type="HOGENOM" id="CLU_024359_0_0_1"/>
<dbReference type="InParanoid" id="P62598"/>
<dbReference type="OMA" id="MPLEFDQ"/>
<dbReference type="PRO" id="PR:P62598"/>
<dbReference type="Proteomes" id="UP000006548">
    <property type="component" value="Chromosome 2"/>
</dbReference>
<dbReference type="ExpressionAtlas" id="P62598">
    <property type="expression patterns" value="baseline and differential"/>
</dbReference>
<dbReference type="GO" id="GO:0005634">
    <property type="term" value="C:nucleus"/>
    <property type="evidence" value="ECO:0000314"/>
    <property type="project" value="TAIR"/>
</dbReference>
<dbReference type="GO" id="GO:0003677">
    <property type="term" value="F:DNA binding"/>
    <property type="evidence" value="ECO:0007669"/>
    <property type="project" value="UniProtKB-KW"/>
</dbReference>
<dbReference type="GO" id="GO:0003700">
    <property type="term" value="F:DNA-binding transcription factor activity"/>
    <property type="evidence" value="ECO:0000250"/>
    <property type="project" value="TAIR"/>
</dbReference>
<dbReference type="GO" id="GO:0000156">
    <property type="term" value="F:phosphorelay response regulator activity"/>
    <property type="evidence" value="ECO:0000250"/>
    <property type="project" value="TAIR"/>
</dbReference>
<dbReference type="GO" id="GO:1990110">
    <property type="term" value="P:callus formation"/>
    <property type="evidence" value="ECO:0000316"/>
    <property type="project" value="TAIR"/>
</dbReference>
<dbReference type="GO" id="GO:0071368">
    <property type="term" value="P:cellular response to cytokinin stimulus"/>
    <property type="evidence" value="ECO:0000315"/>
    <property type="project" value="TAIR"/>
</dbReference>
<dbReference type="GO" id="GO:0009736">
    <property type="term" value="P:cytokinin-activated signaling pathway"/>
    <property type="evidence" value="ECO:0000316"/>
    <property type="project" value="TAIR"/>
</dbReference>
<dbReference type="GO" id="GO:0010492">
    <property type="term" value="P:maintenance of shoot apical meristem identity"/>
    <property type="evidence" value="ECO:0000316"/>
    <property type="project" value="TAIR"/>
</dbReference>
<dbReference type="GO" id="GO:0080022">
    <property type="term" value="P:primary root development"/>
    <property type="evidence" value="ECO:0000316"/>
    <property type="project" value="TAIR"/>
</dbReference>
<dbReference type="GO" id="GO:0031537">
    <property type="term" value="P:regulation of anthocyanin metabolic process"/>
    <property type="evidence" value="ECO:0000316"/>
    <property type="project" value="TAIR"/>
</dbReference>
<dbReference type="GO" id="GO:0010380">
    <property type="term" value="P:regulation of chlorophyll biosynthetic process"/>
    <property type="evidence" value="ECO:0000316"/>
    <property type="project" value="TAIR"/>
</dbReference>
<dbReference type="GO" id="GO:0080036">
    <property type="term" value="P:regulation of cytokinin-activated signaling pathway"/>
    <property type="evidence" value="ECO:0000315"/>
    <property type="project" value="CACAO"/>
</dbReference>
<dbReference type="GO" id="GO:0010082">
    <property type="term" value="P:regulation of root meristem growth"/>
    <property type="evidence" value="ECO:0000315"/>
    <property type="project" value="CACAO"/>
</dbReference>
<dbReference type="GO" id="GO:0080113">
    <property type="term" value="P:regulation of seed growth"/>
    <property type="evidence" value="ECO:0000315"/>
    <property type="project" value="TAIR"/>
</dbReference>
<dbReference type="GO" id="GO:0009735">
    <property type="term" value="P:response to cytokinin"/>
    <property type="evidence" value="ECO:0000316"/>
    <property type="project" value="TAIR"/>
</dbReference>
<dbReference type="GO" id="GO:0009414">
    <property type="term" value="P:response to water deprivation"/>
    <property type="evidence" value="ECO:0000316"/>
    <property type="project" value="TAIR"/>
</dbReference>
<dbReference type="GO" id="GO:0048364">
    <property type="term" value="P:root development"/>
    <property type="evidence" value="ECO:0000315"/>
    <property type="project" value="TAIR"/>
</dbReference>
<dbReference type="GO" id="GO:0048367">
    <property type="term" value="P:shoot system development"/>
    <property type="evidence" value="ECO:0000316"/>
    <property type="project" value="TAIR"/>
</dbReference>
<dbReference type="CDD" id="cd17584">
    <property type="entry name" value="REC_typeB_ARR-like"/>
    <property type="match status" value="1"/>
</dbReference>
<dbReference type="FunFam" id="1.10.10.60:FF:000007">
    <property type="entry name" value="Two-component response regulator"/>
    <property type="match status" value="1"/>
</dbReference>
<dbReference type="FunFam" id="3.40.50.2300:FF:000132">
    <property type="entry name" value="Two-component response regulator"/>
    <property type="match status" value="1"/>
</dbReference>
<dbReference type="Gene3D" id="3.40.50.2300">
    <property type="match status" value="1"/>
</dbReference>
<dbReference type="Gene3D" id="1.10.10.60">
    <property type="entry name" value="Homeodomain-like"/>
    <property type="match status" value="1"/>
</dbReference>
<dbReference type="InterPro" id="IPR045279">
    <property type="entry name" value="ARR-like"/>
</dbReference>
<dbReference type="InterPro" id="IPR011006">
    <property type="entry name" value="CheY-like_superfamily"/>
</dbReference>
<dbReference type="InterPro" id="IPR009057">
    <property type="entry name" value="Homeodomain-like_sf"/>
</dbReference>
<dbReference type="InterPro" id="IPR017930">
    <property type="entry name" value="Myb_dom"/>
</dbReference>
<dbReference type="InterPro" id="IPR006447">
    <property type="entry name" value="Myb_dom_plants"/>
</dbReference>
<dbReference type="InterPro" id="IPR017053">
    <property type="entry name" value="Response_reg_B-typ_pln"/>
</dbReference>
<dbReference type="InterPro" id="IPR001005">
    <property type="entry name" value="SANT/Myb"/>
</dbReference>
<dbReference type="InterPro" id="IPR001789">
    <property type="entry name" value="Sig_transdc_resp-reg_receiver"/>
</dbReference>
<dbReference type="NCBIfam" id="TIGR01557">
    <property type="entry name" value="myb_SHAQKYF"/>
    <property type="match status" value="1"/>
</dbReference>
<dbReference type="PANTHER" id="PTHR43874">
    <property type="entry name" value="TWO-COMPONENT RESPONSE REGULATOR"/>
    <property type="match status" value="1"/>
</dbReference>
<dbReference type="PANTHER" id="PTHR43874:SF209">
    <property type="entry name" value="TWO-COMPONENT RESPONSE REGULATOR ARR12"/>
    <property type="match status" value="1"/>
</dbReference>
<dbReference type="Pfam" id="PF00249">
    <property type="entry name" value="Myb_DNA-binding"/>
    <property type="match status" value="1"/>
</dbReference>
<dbReference type="Pfam" id="PF00072">
    <property type="entry name" value="Response_reg"/>
    <property type="match status" value="1"/>
</dbReference>
<dbReference type="PIRSF" id="PIRSF036392">
    <property type="entry name" value="RR_ARR_type-B"/>
    <property type="match status" value="1"/>
</dbReference>
<dbReference type="SMART" id="SM00448">
    <property type="entry name" value="REC"/>
    <property type="match status" value="1"/>
</dbReference>
<dbReference type="SUPFAM" id="SSF52172">
    <property type="entry name" value="CheY-like"/>
    <property type="match status" value="1"/>
</dbReference>
<dbReference type="SUPFAM" id="SSF46689">
    <property type="entry name" value="Homeodomain-like"/>
    <property type="match status" value="1"/>
</dbReference>
<dbReference type="PROSITE" id="PS51294">
    <property type="entry name" value="HTH_MYB"/>
    <property type="match status" value="1"/>
</dbReference>
<dbReference type="PROSITE" id="PS50110">
    <property type="entry name" value="RESPONSE_REGULATORY"/>
    <property type="match status" value="1"/>
</dbReference>
<gene>
    <name type="primary">ARR12</name>
    <name type="ordered locus">At2g25180</name>
    <name type="ORF">F13D4.140</name>
</gene>
<feature type="chain" id="PRO_0000132297" description="Two-component response regulator ARR12">
    <location>
        <begin position="1"/>
        <end position="596"/>
    </location>
</feature>
<feature type="domain" description="Response regulatory" evidence="4">
    <location>
        <begin position="18"/>
        <end position="133"/>
    </location>
</feature>
<feature type="DNA-binding region" description="Myb-like GARP" evidence="5">
    <location>
        <begin position="197"/>
        <end position="247"/>
    </location>
</feature>
<feature type="region of interest" description="Disordered" evidence="6">
    <location>
        <begin position="138"/>
        <end position="192"/>
    </location>
</feature>
<feature type="region of interest" description="Disordered" evidence="6">
    <location>
        <begin position="437"/>
        <end position="467"/>
    </location>
</feature>
<feature type="short sequence motif" description="Nuclear localization signal" evidence="3">
    <location>
        <begin position="194"/>
        <end position="197"/>
    </location>
</feature>
<feature type="compositionally biased region" description="Basic and acidic residues" evidence="6">
    <location>
        <begin position="138"/>
        <end position="153"/>
    </location>
</feature>
<feature type="compositionally biased region" description="Polar residues" evidence="6">
    <location>
        <begin position="158"/>
        <end position="167"/>
    </location>
</feature>
<feature type="compositionally biased region" description="Acidic residues" evidence="6">
    <location>
        <begin position="177"/>
        <end position="189"/>
    </location>
</feature>
<feature type="compositionally biased region" description="Polar residues" evidence="6">
    <location>
        <begin position="450"/>
        <end position="459"/>
    </location>
</feature>
<feature type="modified residue" description="4-aspartylphosphate" evidence="4">
    <location>
        <position position="69"/>
    </location>
</feature>
<feature type="sequence conflict" description="In Ref. 3; BE522295." evidence="10" ref="3">
    <original>G</original>
    <variation>S</variation>
    <location>
        <position position="414"/>
    </location>
</feature>
<feature type="sequence conflict" description="In Ref. 3; BE522295." evidence="10" ref="3">
    <original>H</original>
    <variation>T</variation>
    <location>
        <position position="426"/>
    </location>
</feature>
<keyword id="KW-0010">Activator</keyword>
<keyword id="KW-0932">Cytokinin signaling pathway</keyword>
<keyword id="KW-0238">DNA-binding</keyword>
<keyword id="KW-0539">Nucleus</keyword>
<keyword id="KW-0597">Phosphoprotein</keyword>
<keyword id="KW-1185">Reference proteome</keyword>
<keyword id="KW-0804">Transcription</keyword>
<keyword id="KW-0805">Transcription regulation</keyword>
<keyword id="KW-0902">Two-component regulatory system</keyword>
<protein>
    <recommendedName>
        <fullName>Two-component response regulator ARR12</fullName>
    </recommendedName>
</protein>
<sequence>MTVEQNLEALDQFPVGMRVLAVDDDQTCLKILESLLRHCQYHVTTTNQAQKALELLRENKNKFDLVISDVDMPDMDGFKLLELVGLEMDLPVIMLSAHSDPKYVMKGVTHGACDYLLKPVRIEELKNIWQHVVRSRFDKNRGSNNNGDKRDGSGNEGVGNSDQNNGKGNRKRKDQYNEDEDEDRDDNDDSCAQKKQRVVWTVELHKKFVAAVNQLGYEKAMPKKILDLMNVEKLTRENVASHLQKFRLYLKRISGVANQQAIMANSELHFMQMNGLDGFHHRPIPVGSGQYHGGAPAMRSFPPNGILGRLNTPSGIGVRSLSSPPAGMFLQNQTDIGKFHHVSSLPLNHSDGGNILQGLPMPLEFDQLQTNNNKSRNMNSNKSIAGTSMAFPSFSTQQNSLISAPNNNVVVLEGHPQATPPGFPGHQINKRLEHWSNAVSSSTHPPPPAHNSNSINHQFDVSPLPHSRPDPLEWNNVSSSYSIPFCDSANTLSSPALDTTNPRAFCRNTDFDSNTNVQPGVFYGPSTDAMALLSSSNPKEGFVVGQQKLQSGGFMVADAGSLDDIVNSTMKQEQSQGDLSGGDLGYGGFSSLRTCI</sequence>